<reference key="1">
    <citation type="journal article" date="1992" name="J. Bacteriol.">
        <title>Nucleotide and deduced amino acid sequences of the lacR, lacABCD, and lacFE genes encoding the repressor, tagatose 6-phosphate gene cluster, and sugar-specific phosphotransferase system components of the lactose operon of Streptococcus mutans.</title>
        <authorList>
            <person name="Rosey E.L."/>
            <person name="Stewart G.C."/>
        </authorList>
    </citation>
    <scope>NUCLEOTIDE SEQUENCE [GENOMIC DNA]</scope>
    <scope>FUNCTION</scope>
    <source>
        <strain>ATCC 700611 / UA130 / Serotype c</strain>
    </source>
</reference>
<reference key="2">
    <citation type="journal article" date="1993" name="J. Gen. Microbiol.">
        <title>Isolation, characterization and nucleotide sequence of the Streptococcus mutans lactose-specific enzyme II (lacE) gene of the PTS and the phospho-beta-galactosidase (lacG) gene.</title>
        <authorList>
            <person name="Honeyman A.L."/>
            <person name="Curtiss R. III"/>
        </authorList>
    </citation>
    <scope>NUCLEOTIDE SEQUENCE [GENOMIC DNA]</scope>
    <source>
        <strain>ATCC 700611 / UA130 / Serotype c</strain>
    </source>
</reference>
<reference key="3">
    <citation type="journal article" date="2002" name="Proc. Natl. Acad. Sci. U.S.A.">
        <title>Genome sequence of Streptococcus mutans UA159, a cariogenic dental pathogen.</title>
        <authorList>
            <person name="Ajdic D.J."/>
            <person name="McShan W.M."/>
            <person name="McLaughlin R.E."/>
            <person name="Savic G."/>
            <person name="Chang J."/>
            <person name="Carson M.B."/>
            <person name="Primeaux C."/>
            <person name="Tian R."/>
            <person name="Kenton S."/>
            <person name="Jia H.G."/>
            <person name="Lin S.P."/>
            <person name="Qian Y."/>
            <person name="Li S."/>
            <person name="Zhu H."/>
            <person name="Najar F.Z."/>
            <person name="Lai H."/>
            <person name="White J."/>
            <person name="Roe B.A."/>
            <person name="Ferretti J.J."/>
        </authorList>
    </citation>
    <scope>NUCLEOTIDE SEQUENCE [LARGE SCALE GENOMIC DNA]</scope>
    <source>
        <strain>ATCC 700610 / UA159</strain>
    </source>
</reference>
<keyword id="KW-1003">Cell membrane</keyword>
<keyword id="KW-0418">Kinase</keyword>
<keyword id="KW-0472">Membrane</keyword>
<keyword id="KW-0597">Phosphoprotein</keyword>
<keyword id="KW-0598">Phosphotransferase system</keyword>
<keyword id="KW-1185">Reference proteome</keyword>
<keyword id="KW-0762">Sugar transport</keyword>
<keyword id="KW-0808">Transferase</keyword>
<keyword id="KW-0812">Transmembrane</keyword>
<keyword id="KW-1133">Transmembrane helix</keyword>
<keyword id="KW-0813">Transport</keyword>
<comment type="function">
    <text evidence="2 6">The phosphoenolpyruvate-dependent sugar phosphotransferase system (sugar PTS), a major carbohydrate active transport system, catalyzes the phosphorylation of incoming sugar substrates concomitantly with their translocation across the cell membrane. The enzyme II LacEF PTS system is involved in lactose transport.</text>
</comment>
<comment type="catalytic activity">
    <reaction evidence="2">
        <text>lactose(out) + N(pros)-phospho-L-histidyl-[protein] = lactose 6-phosphate(in) + L-histidyl-[protein]</text>
        <dbReference type="Rhea" id="RHEA:42400"/>
        <dbReference type="Rhea" id="RHEA-COMP:9745"/>
        <dbReference type="Rhea" id="RHEA-COMP:9746"/>
        <dbReference type="ChEBI" id="CHEBI:17716"/>
        <dbReference type="ChEBI" id="CHEBI:29979"/>
        <dbReference type="ChEBI" id="CHEBI:64837"/>
        <dbReference type="ChEBI" id="CHEBI:79080"/>
        <dbReference type="EC" id="2.7.1.207"/>
    </reaction>
</comment>
<comment type="subcellular location">
    <subcellularLocation>
        <location evidence="4">Cell membrane</location>
        <topology evidence="4">Multi-pass membrane protein</topology>
    </subcellularLocation>
</comment>
<comment type="induction">
    <text evidence="1">Induced by lactose, galactose and galactose-6-P. Repressed by glucose.</text>
</comment>
<comment type="domain">
    <text evidence="4">The EIIC type-3 domain forms the PTS system translocation channel and contains the specific substrate-binding site.</text>
</comment>
<comment type="domain">
    <text evidence="3">The PTS EIIB type-3 domain is phosphorylated by phospho-EIIA on a cysteinyl residue. Then, it transfers the phosphoryl group to the sugar substrate concomitantly with the sugar uptake processed by the PTS EIIC type-3 domain.</text>
</comment>
<organism>
    <name type="scientific">Streptococcus mutans serotype c (strain ATCC 700610 / UA159)</name>
    <dbReference type="NCBI Taxonomy" id="210007"/>
    <lineage>
        <taxon>Bacteria</taxon>
        <taxon>Bacillati</taxon>
        <taxon>Bacillota</taxon>
        <taxon>Bacilli</taxon>
        <taxon>Lactobacillales</taxon>
        <taxon>Streptococcaceae</taxon>
        <taxon>Streptococcus</taxon>
    </lineage>
</organism>
<proteinExistence type="inferred from homology"/>
<feature type="chain" id="PRO_0000186595" description="PTS system lactose-specific EIICB component">
    <location>
        <begin position="1"/>
        <end position="568"/>
    </location>
</feature>
<feature type="transmembrane region" description="Helical" evidence="4">
    <location>
        <begin position="30"/>
        <end position="50"/>
    </location>
</feature>
<feature type="transmembrane region" description="Helical" evidence="4">
    <location>
        <begin position="65"/>
        <end position="85"/>
    </location>
</feature>
<feature type="transmembrane region" description="Helical" evidence="4">
    <location>
        <begin position="103"/>
        <end position="123"/>
    </location>
</feature>
<feature type="transmembrane region" description="Helical" evidence="4">
    <location>
        <begin position="128"/>
        <end position="148"/>
    </location>
</feature>
<feature type="transmembrane region" description="Helical" evidence="4">
    <location>
        <begin position="183"/>
        <end position="203"/>
    </location>
</feature>
<feature type="transmembrane region" description="Helical" evidence="4">
    <location>
        <begin position="222"/>
        <end position="242"/>
    </location>
</feature>
<feature type="transmembrane region" description="Helical" evidence="4">
    <location>
        <begin position="246"/>
        <end position="266"/>
    </location>
</feature>
<feature type="transmembrane region" description="Helical" evidence="4">
    <location>
        <begin position="283"/>
        <end position="303"/>
    </location>
</feature>
<feature type="transmembrane region" description="Helical" evidence="4">
    <location>
        <begin position="339"/>
        <end position="359"/>
    </location>
</feature>
<feature type="transmembrane region" description="Helical" evidence="4">
    <location>
        <begin position="381"/>
        <end position="401"/>
    </location>
</feature>
<feature type="domain" description="PTS EIIC type-3" evidence="4">
    <location>
        <begin position="8"/>
        <end position="409"/>
    </location>
</feature>
<feature type="domain" description="PTS EIIB type-3" evidence="3">
    <location>
        <begin position="465"/>
        <end position="568"/>
    </location>
</feature>
<feature type="active site" description="Phosphocysteine intermediate; for EIIB activity" evidence="2">
    <location>
        <position position="472"/>
    </location>
</feature>
<feature type="modified residue" description="Phosphocysteine; by EIIA" evidence="2 3">
    <location>
        <position position="472"/>
    </location>
</feature>
<accession>P50976</accession>
<dbReference type="EC" id="2.7.1.207" evidence="2"/>
<dbReference type="EMBL" id="L18993">
    <property type="protein sequence ID" value="AAA16449.1"/>
    <property type="molecule type" value="Unassigned_DNA"/>
</dbReference>
<dbReference type="EMBL" id="AE014133">
    <property type="protein sequence ID" value="AAN59145.1"/>
    <property type="molecule type" value="Genomic_DNA"/>
</dbReference>
<dbReference type="RefSeq" id="NP_721839.1">
    <property type="nucleotide sequence ID" value="NC_004350.2"/>
</dbReference>
<dbReference type="RefSeq" id="WP_002263057.1">
    <property type="nucleotide sequence ID" value="NC_004350.2"/>
</dbReference>
<dbReference type="SMR" id="P50976"/>
<dbReference type="STRING" id="210007.SMU_1491"/>
<dbReference type="KEGG" id="smu:SMU_1491"/>
<dbReference type="PATRIC" id="fig|210007.7.peg.1327"/>
<dbReference type="eggNOG" id="COG1440">
    <property type="taxonomic scope" value="Bacteria"/>
</dbReference>
<dbReference type="eggNOG" id="COG1455">
    <property type="taxonomic scope" value="Bacteria"/>
</dbReference>
<dbReference type="HOGENOM" id="CLU_029688_0_0_9"/>
<dbReference type="OrthoDB" id="1641940at2"/>
<dbReference type="PhylomeDB" id="P50976"/>
<dbReference type="Proteomes" id="UP000002512">
    <property type="component" value="Chromosome"/>
</dbReference>
<dbReference type="GO" id="GO:0005886">
    <property type="term" value="C:plasma membrane"/>
    <property type="evidence" value="ECO:0007669"/>
    <property type="project" value="UniProtKB-SubCell"/>
</dbReference>
<dbReference type="GO" id="GO:0016301">
    <property type="term" value="F:kinase activity"/>
    <property type="evidence" value="ECO:0007669"/>
    <property type="project" value="UniProtKB-KW"/>
</dbReference>
<dbReference type="GO" id="GO:0022869">
    <property type="term" value="F:protein-N(PI)-phosphohistidine-lactose phosphotransferase system transporter activity"/>
    <property type="evidence" value="ECO:0007669"/>
    <property type="project" value="InterPro"/>
</dbReference>
<dbReference type="GO" id="GO:1901264">
    <property type="term" value="P:carbohydrate derivative transport"/>
    <property type="evidence" value="ECO:0007669"/>
    <property type="project" value="TreeGrafter"/>
</dbReference>
<dbReference type="GO" id="GO:0009401">
    <property type="term" value="P:phosphoenolpyruvate-dependent sugar phosphotransferase system"/>
    <property type="evidence" value="ECO:0007669"/>
    <property type="project" value="UniProtKB-KW"/>
</dbReference>
<dbReference type="CDD" id="cd05565">
    <property type="entry name" value="PTS_IIB_lactose"/>
    <property type="match status" value="1"/>
</dbReference>
<dbReference type="Gene3D" id="3.40.50.2300">
    <property type="match status" value="1"/>
</dbReference>
<dbReference type="InterPro" id="IPR004801">
    <property type="entry name" value="LacE"/>
</dbReference>
<dbReference type="InterPro" id="IPR036095">
    <property type="entry name" value="PTS_EIIB-like_sf"/>
</dbReference>
<dbReference type="InterPro" id="IPR003501">
    <property type="entry name" value="PTS_EIIB_2/3"/>
</dbReference>
<dbReference type="InterPro" id="IPR013012">
    <property type="entry name" value="PTS_EIIB_3"/>
</dbReference>
<dbReference type="InterPro" id="IPR003352">
    <property type="entry name" value="PTS_EIIC"/>
</dbReference>
<dbReference type="InterPro" id="IPR004501">
    <property type="entry name" value="PTS_EIIC_3"/>
</dbReference>
<dbReference type="InterPro" id="IPR041713">
    <property type="entry name" value="PTS_IIB"/>
</dbReference>
<dbReference type="InterPro" id="IPR051088">
    <property type="entry name" value="PTS_Sugar-EIIC/EIIB"/>
</dbReference>
<dbReference type="NCBIfam" id="TIGR00394">
    <property type="entry name" value="lac_pts_IIC"/>
    <property type="match status" value="1"/>
</dbReference>
<dbReference type="NCBIfam" id="TIGR00410">
    <property type="entry name" value="lacE"/>
    <property type="match status" value="1"/>
</dbReference>
<dbReference type="NCBIfam" id="TIGR00853">
    <property type="entry name" value="pts-lac"/>
    <property type="match status" value="1"/>
</dbReference>
<dbReference type="PANTHER" id="PTHR33989">
    <property type="match status" value="1"/>
</dbReference>
<dbReference type="PANTHER" id="PTHR33989:SF8">
    <property type="entry name" value="PERMEASE IIC COMPONENT"/>
    <property type="match status" value="1"/>
</dbReference>
<dbReference type="Pfam" id="PF02378">
    <property type="entry name" value="PTS_EIIC"/>
    <property type="match status" value="1"/>
</dbReference>
<dbReference type="Pfam" id="PF02302">
    <property type="entry name" value="PTS_IIB"/>
    <property type="match status" value="1"/>
</dbReference>
<dbReference type="SUPFAM" id="SSF52794">
    <property type="entry name" value="PTS system IIB component-like"/>
    <property type="match status" value="1"/>
</dbReference>
<dbReference type="PROSITE" id="PS51100">
    <property type="entry name" value="PTS_EIIB_TYPE_3"/>
    <property type="match status" value="1"/>
</dbReference>
<dbReference type="PROSITE" id="PS51105">
    <property type="entry name" value="PTS_EIIC_TYPE_3"/>
    <property type="match status" value="1"/>
</dbReference>
<name>PTLCB_STRMU</name>
<gene>
    <name evidence="5" type="primary">lacE</name>
    <name type="ordered locus">SMU_1491</name>
</gene>
<protein>
    <recommendedName>
        <fullName evidence="5">PTS system lactose-specific EIICB component</fullName>
    </recommendedName>
    <alternativeName>
        <fullName evidence="5">EIICB-Lac</fullName>
        <shortName evidence="5">EII-Lac</shortName>
    </alternativeName>
    <domain>
        <recommendedName>
            <fullName evidence="5">PTS system lactose-specific EIIC component</fullName>
        </recommendedName>
        <alternativeName>
            <fullName evidence="5">Lactose permease IIC component</fullName>
        </alternativeName>
    </domain>
    <domain>
        <recommendedName>
            <fullName evidence="5">PTS system lactose-specific EIIB component</fullName>
            <ecNumber evidence="2">2.7.1.207</ecNumber>
        </recommendedName>
        <alternativeName>
            <fullName evidence="5">Lactose-specific phosphotransferase enzyme IIB component</fullName>
        </alternativeName>
    </domain>
</protein>
<sequence length="568" mass="61420">MNTLIAQIEKGKPFFEKISRNIYLRAIRDGFISAMPVILFSSIFLLIAYVPNIFGFTWPKGIENMLMTPYNYTMGIIGFLVAGTTAKSLTDSMNRQLEKTNQINFISTMLASMAGFLIMAADPAKEGGFLSAFMGTKGLLTAFIAAFITVNVYKICVKNNVTIRMPEEVPPNISQVFKDIFPFAFSIIILYAIQLAIKAVIGVNVAQSIGTLLAPLFSAADGYLGITIIFGAYALFWFVGIHGPSIVEPAIAAITYSNVELNAHLIHAGQHADKVITSGTQMFIVTMGGTGATLVVPFMFMWLCKSKRNKAIGRASVVPTFFGVNEPILFGAPIVLNPVFFIPFILAPIVNVWIFKFFVDTLGMNSFFANLPWTTPGPIGIVLGTGFAVLSFVLAALLILVDTVIYYPFVKVYDEQILAEEAEGKSSSDALKEKVAANFDTKKADAILEGAESKEEPATHAITEETNVLVLCAGGGTSGLLANALNKAAEEYGAPVKAAAGSYGAHREILDQYQLVILAPQVASNYEDMKAETDKLGIKLAKTEGAQYIGLTRDGKGALAFVEEQFKD</sequence>
<evidence type="ECO:0000250" key="1">
    <source>
        <dbReference type="UniProtKB" id="P23531"/>
    </source>
</evidence>
<evidence type="ECO:0000250" key="2">
    <source>
        <dbReference type="UniProtKB" id="P24400"/>
    </source>
</evidence>
<evidence type="ECO:0000255" key="3">
    <source>
        <dbReference type="PROSITE-ProRule" id="PRU00423"/>
    </source>
</evidence>
<evidence type="ECO:0000255" key="4">
    <source>
        <dbReference type="PROSITE-ProRule" id="PRU00428"/>
    </source>
</evidence>
<evidence type="ECO:0000303" key="5">
    <source>
    </source>
</evidence>
<evidence type="ECO:0000305" key="6">
    <source>
    </source>
</evidence>